<keyword id="KW-0997">Cell inner membrane</keyword>
<keyword id="KW-1003">Cell membrane</keyword>
<keyword id="KW-0472">Membrane</keyword>
<keyword id="KW-0812">Transmembrane</keyword>
<keyword id="KW-1133">Transmembrane helix</keyword>
<comment type="function">
    <text evidence="1">Two distinct, membrane-bound, FAD-containing enzymes are responsible for the catalysis of fumarate and succinate interconversion; fumarate reductase is used in anaerobic growth, and succinate dehydrogenase is used in aerobic growth. Anchors the catalytic components of the fumarate reductase complex to the cell inner membrane, binds quinones.</text>
</comment>
<comment type="subunit">
    <text evidence="1">Part of an enzyme complex containing four subunits: a flavoprotein (FrdA), an iron-sulfur protein (FrdB), and two hydrophobic anchor proteins (FrdC and FrdD).</text>
</comment>
<comment type="subcellular location">
    <subcellularLocation>
        <location evidence="1">Cell inner membrane</location>
        <topology evidence="1">Multi-pass membrane protein</topology>
    </subcellularLocation>
</comment>
<comment type="similarity">
    <text evidence="1">Belongs to the FrdD family.</text>
</comment>
<name>FRDD_SALG2</name>
<dbReference type="EMBL" id="AM933173">
    <property type="protein sequence ID" value="CAR39949.1"/>
    <property type="molecule type" value="Genomic_DNA"/>
</dbReference>
<dbReference type="RefSeq" id="WP_000609650.1">
    <property type="nucleotide sequence ID" value="NC_011274.1"/>
</dbReference>
<dbReference type="SMR" id="B5R9A1"/>
<dbReference type="KEGG" id="seg:SG4183"/>
<dbReference type="HOGENOM" id="CLU_168367_0_0_6"/>
<dbReference type="Proteomes" id="UP000008321">
    <property type="component" value="Chromosome"/>
</dbReference>
<dbReference type="GO" id="GO:0045283">
    <property type="term" value="C:fumarate reductase complex"/>
    <property type="evidence" value="ECO:0007669"/>
    <property type="project" value="UniProtKB-UniRule"/>
</dbReference>
<dbReference type="GO" id="GO:0005886">
    <property type="term" value="C:plasma membrane"/>
    <property type="evidence" value="ECO:0007669"/>
    <property type="project" value="UniProtKB-SubCell"/>
</dbReference>
<dbReference type="GO" id="GO:0000104">
    <property type="term" value="F:succinate dehydrogenase activity"/>
    <property type="evidence" value="ECO:0007669"/>
    <property type="project" value="UniProtKB-UniRule"/>
</dbReference>
<dbReference type="GO" id="GO:0006106">
    <property type="term" value="P:fumarate metabolic process"/>
    <property type="evidence" value="ECO:0007669"/>
    <property type="project" value="InterPro"/>
</dbReference>
<dbReference type="CDD" id="cd00547">
    <property type="entry name" value="QFR_TypeD_subunitD"/>
    <property type="match status" value="1"/>
</dbReference>
<dbReference type="FunFam" id="1.20.1300.10:FF:000002">
    <property type="entry name" value="Fumarate reductase subunit D"/>
    <property type="match status" value="1"/>
</dbReference>
<dbReference type="Gene3D" id="1.20.1300.10">
    <property type="entry name" value="Fumarate reductase/succinate dehydrogenase, transmembrane subunit"/>
    <property type="match status" value="1"/>
</dbReference>
<dbReference type="HAMAP" id="MF_00709">
    <property type="entry name" value="Fumarate_red_D"/>
    <property type="match status" value="1"/>
</dbReference>
<dbReference type="InterPro" id="IPR003418">
    <property type="entry name" value="Fumarate_red_D"/>
</dbReference>
<dbReference type="InterPro" id="IPR034804">
    <property type="entry name" value="SQR/QFR_C/D"/>
</dbReference>
<dbReference type="NCBIfam" id="NF003977">
    <property type="entry name" value="PRK05470.1-1"/>
    <property type="match status" value="1"/>
</dbReference>
<dbReference type="Pfam" id="PF02313">
    <property type="entry name" value="Fumarate_red_D"/>
    <property type="match status" value="1"/>
</dbReference>
<dbReference type="PIRSF" id="PIRSF000179">
    <property type="entry name" value="FrdD"/>
    <property type="match status" value="1"/>
</dbReference>
<dbReference type="SUPFAM" id="SSF81343">
    <property type="entry name" value="Fumarate reductase respiratory complex transmembrane subunits"/>
    <property type="match status" value="1"/>
</dbReference>
<gene>
    <name evidence="1" type="primary">frdD</name>
    <name type="ordered locus">SG4183</name>
</gene>
<proteinExistence type="inferred from homology"/>
<sequence>MINPNPKRSDEPVFWGLFGAGGMWGAIIAPVIVLLVGIMLPLGLFPGDALSFERVLTFAQSFIGRVFLFLMIVLPLWCGLHRMHHAMHDLKIHVPAGKWVFYGLAAILTVVTAIGVITL</sequence>
<accession>B5R9A1</accession>
<evidence type="ECO:0000255" key="1">
    <source>
        <dbReference type="HAMAP-Rule" id="MF_00709"/>
    </source>
</evidence>
<feature type="chain" id="PRO_1000132411" description="Fumarate reductase subunit D">
    <location>
        <begin position="1"/>
        <end position="119"/>
    </location>
</feature>
<feature type="transmembrane region" description="Helical" evidence="1">
    <location>
        <begin position="25"/>
        <end position="45"/>
    </location>
</feature>
<feature type="transmembrane region" description="Helical" evidence="1">
    <location>
        <begin position="61"/>
        <end position="81"/>
    </location>
</feature>
<feature type="transmembrane region" description="Helical" evidence="1">
    <location>
        <begin position="99"/>
        <end position="119"/>
    </location>
</feature>
<reference key="1">
    <citation type="journal article" date="2008" name="Genome Res.">
        <title>Comparative genome analysis of Salmonella enteritidis PT4 and Salmonella gallinarum 287/91 provides insights into evolutionary and host adaptation pathways.</title>
        <authorList>
            <person name="Thomson N.R."/>
            <person name="Clayton D.J."/>
            <person name="Windhorst D."/>
            <person name="Vernikos G."/>
            <person name="Davidson S."/>
            <person name="Churcher C."/>
            <person name="Quail M.A."/>
            <person name="Stevens M."/>
            <person name="Jones M.A."/>
            <person name="Watson M."/>
            <person name="Barron A."/>
            <person name="Layton A."/>
            <person name="Pickard D."/>
            <person name="Kingsley R.A."/>
            <person name="Bignell A."/>
            <person name="Clark L."/>
            <person name="Harris B."/>
            <person name="Ormond D."/>
            <person name="Abdellah Z."/>
            <person name="Brooks K."/>
            <person name="Cherevach I."/>
            <person name="Chillingworth T."/>
            <person name="Woodward J."/>
            <person name="Norberczak H."/>
            <person name="Lord A."/>
            <person name="Arrowsmith C."/>
            <person name="Jagels K."/>
            <person name="Moule S."/>
            <person name="Mungall K."/>
            <person name="Saunders M."/>
            <person name="Whitehead S."/>
            <person name="Chabalgoity J.A."/>
            <person name="Maskell D."/>
            <person name="Humphreys T."/>
            <person name="Roberts M."/>
            <person name="Barrow P.A."/>
            <person name="Dougan G."/>
            <person name="Parkhill J."/>
        </authorList>
    </citation>
    <scope>NUCLEOTIDE SEQUENCE [LARGE SCALE GENOMIC DNA]</scope>
    <source>
        <strain>287/91 / NCTC 13346</strain>
    </source>
</reference>
<protein>
    <recommendedName>
        <fullName evidence="1">Fumarate reductase subunit D</fullName>
    </recommendedName>
    <alternativeName>
        <fullName evidence="1">Fumarate reductase 13 kDa hydrophobic protein</fullName>
    </alternativeName>
    <alternativeName>
        <fullName evidence="1">Quinol-fumarate reductase subunit D</fullName>
        <shortName evidence="1">QFR subunit D</shortName>
    </alternativeName>
</protein>
<organism>
    <name type="scientific">Salmonella gallinarum (strain 287/91 / NCTC 13346)</name>
    <dbReference type="NCBI Taxonomy" id="550538"/>
    <lineage>
        <taxon>Bacteria</taxon>
        <taxon>Pseudomonadati</taxon>
        <taxon>Pseudomonadota</taxon>
        <taxon>Gammaproteobacteria</taxon>
        <taxon>Enterobacterales</taxon>
        <taxon>Enterobacteriaceae</taxon>
        <taxon>Salmonella</taxon>
    </lineage>
</organism>